<proteinExistence type="inferred from homology"/>
<feature type="chain" id="PRO_0000189050" description="Probable septum site-determining protein MinC">
    <location>
        <begin position="1"/>
        <end position="227"/>
    </location>
</feature>
<reference key="1">
    <citation type="journal article" date="2003" name="Nat. Biotechnol.">
        <title>The genome sequence of the entomopathogenic bacterium Photorhabdus luminescens.</title>
        <authorList>
            <person name="Duchaud E."/>
            <person name="Rusniok C."/>
            <person name="Frangeul L."/>
            <person name="Buchrieser C."/>
            <person name="Givaudan A."/>
            <person name="Taourit S."/>
            <person name="Bocs S."/>
            <person name="Boursaux-Eude C."/>
            <person name="Chandler M."/>
            <person name="Charles J.-F."/>
            <person name="Dassa E."/>
            <person name="Derose R."/>
            <person name="Derzelle S."/>
            <person name="Freyssinet G."/>
            <person name="Gaudriault S."/>
            <person name="Medigue C."/>
            <person name="Lanois A."/>
            <person name="Powell K."/>
            <person name="Siguier P."/>
            <person name="Vincent R."/>
            <person name="Wingate V."/>
            <person name="Zouine M."/>
            <person name="Glaser P."/>
            <person name="Boemare N."/>
            <person name="Danchin A."/>
            <person name="Kunst F."/>
        </authorList>
    </citation>
    <scope>NUCLEOTIDE SEQUENCE [LARGE SCALE GENOMIC DNA]</scope>
    <source>
        <strain>DSM 15139 / CIP 105565 / TT01</strain>
    </source>
</reference>
<evidence type="ECO:0000255" key="1">
    <source>
        <dbReference type="HAMAP-Rule" id="MF_00267"/>
    </source>
</evidence>
<name>MINC_PHOLL</name>
<organism>
    <name type="scientific">Photorhabdus laumondii subsp. laumondii (strain DSM 15139 / CIP 105565 / TT01)</name>
    <name type="common">Photorhabdus luminescens subsp. laumondii</name>
    <dbReference type="NCBI Taxonomy" id="243265"/>
    <lineage>
        <taxon>Bacteria</taxon>
        <taxon>Pseudomonadati</taxon>
        <taxon>Pseudomonadota</taxon>
        <taxon>Gammaproteobacteria</taxon>
        <taxon>Enterobacterales</taxon>
        <taxon>Morganellaceae</taxon>
        <taxon>Photorhabdus</taxon>
    </lineage>
</organism>
<comment type="function">
    <text evidence="1">Cell division inhibitor that blocks the formation of polar Z ring septums. Rapidly oscillates between the poles of the cell to destabilize FtsZ filaments that have formed before they mature into polar Z rings. Prevents FtsZ polymerization.</text>
</comment>
<comment type="subunit">
    <text evidence="1">Interacts with MinD and FtsZ.</text>
</comment>
<comment type="similarity">
    <text evidence="1">Belongs to the MinC family.</text>
</comment>
<sequence length="227" mass="24418">MSQSPIELKGSNFTLSVVHLHNDQPEIILQALQEKVEQAPDFLKNAPVVINISALPADADLKALHHAIDSAGFRIVGMSGCRDEQQRRAVIKASLPLLSEGKKQKTSAKEDKPAEPAIKKTRVINLPVRSGQRIYAQGSDLIVTSNVSAGAELIADGNIHIYGMMRGRALAGASGDQECLVFCTHLNAELISIAGQYWLGDKIPTELAGKAAKLSLVNNELTIEPLI</sequence>
<accession>Q7N522</accession>
<dbReference type="EMBL" id="BX571866">
    <property type="protein sequence ID" value="CAE14431.1"/>
    <property type="molecule type" value="Genomic_DNA"/>
</dbReference>
<dbReference type="RefSeq" id="WP_011146392.1">
    <property type="nucleotide sequence ID" value="NC_005126.1"/>
</dbReference>
<dbReference type="SMR" id="Q7N522"/>
<dbReference type="STRING" id="243265.plu2138"/>
<dbReference type="GeneID" id="48848418"/>
<dbReference type="KEGG" id="plu:plu2138"/>
<dbReference type="eggNOG" id="COG0850">
    <property type="taxonomic scope" value="Bacteria"/>
</dbReference>
<dbReference type="HOGENOM" id="CLU_067812_0_1_6"/>
<dbReference type="OrthoDB" id="9794530at2"/>
<dbReference type="Proteomes" id="UP000002514">
    <property type="component" value="Chromosome"/>
</dbReference>
<dbReference type="GO" id="GO:0000902">
    <property type="term" value="P:cell morphogenesis"/>
    <property type="evidence" value="ECO:0007669"/>
    <property type="project" value="InterPro"/>
</dbReference>
<dbReference type="GO" id="GO:0000917">
    <property type="term" value="P:division septum assembly"/>
    <property type="evidence" value="ECO:0007669"/>
    <property type="project" value="UniProtKB-KW"/>
</dbReference>
<dbReference type="GO" id="GO:0051302">
    <property type="term" value="P:regulation of cell division"/>
    <property type="evidence" value="ECO:0007669"/>
    <property type="project" value="InterPro"/>
</dbReference>
<dbReference type="GO" id="GO:1901891">
    <property type="term" value="P:regulation of cell septum assembly"/>
    <property type="evidence" value="ECO:0007669"/>
    <property type="project" value="InterPro"/>
</dbReference>
<dbReference type="Gene3D" id="2.160.20.70">
    <property type="match status" value="1"/>
</dbReference>
<dbReference type="Gene3D" id="3.30.70.260">
    <property type="match status" value="1"/>
</dbReference>
<dbReference type="HAMAP" id="MF_00267">
    <property type="entry name" value="MinC"/>
    <property type="match status" value="1"/>
</dbReference>
<dbReference type="InterPro" id="IPR016098">
    <property type="entry name" value="CAP/MinC_C"/>
</dbReference>
<dbReference type="InterPro" id="IPR013033">
    <property type="entry name" value="MinC"/>
</dbReference>
<dbReference type="InterPro" id="IPR036145">
    <property type="entry name" value="MinC_C_sf"/>
</dbReference>
<dbReference type="InterPro" id="IPR007874">
    <property type="entry name" value="MinC_N"/>
</dbReference>
<dbReference type="InterPro" id="IPR005526">
    <property type="entry name" value="Septum_form_inhib_MinC_C"/>
</dbReference>
<dbReference type="NCBIfam" id="TIGR01222">
    <property type="entry name" value="minC"/>
    <property type="match status" value="1"/>
</dbReference>
<dbReference type="PANTHER" id="PTHR34108">
    <property type="entry name" value="SEPTUM SITE-DETERMINING PROTEIN MINC"/>
    <property type="match status" value="1"/>
</dbReference>
<dbReference type="PANTHER" id="PTHR34108:SF1">
    <property type="entry name" value="SEPTUM SITE-DETERMINING PROTEIN MINC"/>
    <property type="match status" value="1"/>
</dbReference>
<dbReference type="Pfam" id="PF03775">
    <property type="entry name" value="MinC_C"/>
    <property type="match status" value="1"/>
</dbReference>
<dbReference type="Pfam" id="PF05209">
    <property type="entry name" value="MinC_N"/>
    <property type="match status" value="1"/>
</dbReference>
<dbReference type="SUPFAM" id="SSF63848">
    <property type="entry name" value="Cell-division inhibitor MinC, C-terminal domain"/>
    <property type="match status" value="1"/>
</dbReference>
<protein>
    <recommendedName>
        <fullName evidence="1">Probable septum site-determining protein MinC</fullName>
    </recommendedName>
</protein>
<gene>
    <name evidence="1" type="primary">minC</name>
    <name type="ordered locus">plu2138</name>
</gene>
<keyword id="KW-0131">Cell cycle</keyword>
<keyword id="KW-0132">Cell division</keyword>
<keyword id="KW-1185">Reference proteome</keyword>
<keyword id="KW-0717">Septation</keyword>